<dbReference type="EC" id="2.5.1.18"/>
<dbReference type="EMBL" id="AF288190">
    <property type="protein sequence ID" value="AAG30139.1"/>
    <property type="molecule type" value="mRNA"/>
</dbReference>
<dbReference type="EMBL" id="AC005489">
    <property type="protein sequence ID" value="AAD32886.1"/>
    <property type="status" value="ALT_SEQ"/>
    <property type="molecule type" value="Genomic_DNA"/>
</dbReference>
<dbReference type="EMBL" id="CP002684">
    <property type="protein sequence ID" value="AEE28570.1"/>
    <property type="molecule type" value="Genomic_DNA"/>
</dbReference>
<dbReference type="EMBL" id="BT000940">
    <property type="protein sequence ID" value="AAN41340.1"/>
    <property type="molecule type" value="mRNA"/>
</dbReference>
<dbReference type="EMBL" id="AK317183">
    <property type="protein sequence ID" value="BAH19868.1"/>
    <property type="molecule type" value="mRNA"/>
</dbReference>
<dbReference type="RefSeq" id="NP_172507.1">
    <property type="nucleotide sequence ID" value="NM_100910.5"/>
</dbReference>
<dbReference type="SMR" id="Q9FUS9"/>
<dbReference type="BioGRID" id="22815">
    <property type="interactions" value="1"/>
</dbReference>
<dbReference type="FunCoup" id="Q9FUS9">
    <property type="interactions" value="206"/>
</dbReference>
<dbReference type="IntAct" id="Q9FUS9">
    <property type="interactions" value="1"/>
</dbReference>
<dbReference type="STRING" id="3702.Q9FUS9"/>
<dbReference type="PaxDb" id="3702-AT1G10360.1"/>
<dbReference type="ProteomicsDB" id="247141"/>
<dbReference type="EnsemblPlants" id="AT1G10360.1">
    <property type="protein sequence ID" value="AT1G10360.1"/>
    <property type="gene ID" value="AT1G10360"/>
</dbReference>
<dbReference type="GeneID" id="837575"/>
<dbReference type="Gramene" id="AT1G10360.1">
    <property type="protein sequence ID" value="AT1G10360.1"/>
    <property type="gene ID" value="AT1G10360"/>
</dbReference>
<dbReference type="KEGG" id="ath:AT1G10360"/>
<dbReference type="Araport" id="AT1G10360"/>
<dbReference type="TAIR" id="AT1G10360">
    <property type="gene designation" value="GSTU18"/>
</dbReference>
<dbReference type="eggNOG" id="KOG0406">
    <property type="taxonomic scope" value="Eukaryota"/>
</dbReference>
<dbReference type="HOGENOM" id="CLU_011226_18_0_1"/>
<dbReference type="InParanoid" id="Q9FUS9"/>
<dbReference type="OMA" id="LGWWRVV"/>
<dbReference type="OrthoDB" id="4951845at2759"/>
<dbReference type="PhylomeDB" id="Q9FUS9"/>
<dbReference type="BioCyc" id="ARA:AT1G10360-MONOMER"/>
<dbReference type="BRENDA" id="2.5.1.18">
    <property type="organism ID" value="399"/>
</dbReference>
<dbReference type="PRO" id="PR:Q9FUS9"/>
<dbReference type="Proteomes" id="UP000006548">
    <property type="component" value="Chromosome 1"/>
</dbReference>
<dbReference type="ExpressionAtlas" id="Q9FUS9">
    <property type="expression patterns" value="baseline and differential"/>
</dbReference>
<dbReference type="GO" id="GO:0005737">
    <property type="term" value="C:cytoplasm"/>
    <property type="evidence" value="ECO:0000303"/>
    <property type="project" value="TAIR"/>
</dbReference>
<dbReference type="GO" id="GO:0005829">
    <property type="term" value="C:cytosol"/>
    <property type="evidence" value="ECO:0007669"/>
    <property type="project" value="UniProtKB-SubCell"/>
</dbReference>
<dbReference type="GO" id="GO:0004364">
    <property type="term" value="F:glutathione transferase activity"/>
    <property type="evidence" value="ECO:0007669"/>
    <property type="project" value="UniProtKB-EC"/>
</dbReference>
<dbReference type="GO" id="GO:0006749">
    <property type="term" value="P:glutathione metabolic process"/>
    <property type="evidence" value="ECO:0007669"/>
    <property type="project" value="InterPro"/>
</dbReference>
<dbReference type="GO" id="GO:0009407">
    <property type="term" value="P:toxin catabolic process"/>
    <property type="evidence" value="ECO:0000304"/>
    <property type="project" value="TAIR"/>
</dbReference>
<dbReference type="CDD" id="cd03185">
    <property type="entry name" value="GST_C_Tau"/>
    <property type="match status" value="1"/>
</dbReference>
<dbReference type="CDD" id="cd03058">
    <property type="entry name" value="GST_N_Tau"/>
    <property type="match status" value="1"/>
</dbReference>
<dbReference type="FunFam" id="3.40.30.10:FF:000044">
    <property type="entry name" value="Glutathione S-transferase GSTU6"/>
    <property type="match status" value="1"/>
</dbReference>
<dbReference type="FunFam" id="1.20.1050.10:FF:000016">
    <property type="entry name" value="Glutathione S-transferase U9"/>
    <property type="match status" value="1"/>
</dbReference>
<dbReference type="Gene3D" id="1.20.1050.10">
    <property type="match status" value="1"/>
</dbReference>
<dbReference type="Gene3D" id="3.40.30.10">
    <property type="entry name" value="Glutaredoxin"/>
    <property type="match status" value="1"/>
</dbReference>
<dbReference type="InterPro" id="IPR010987">
    <property type="entry name" value="Glutathione-S-Trfase_C-like"/>
</dbReference>
<dbReference type="InterPro" id="IPR036282">
    <property type="entry name" value="Glutathione-S-Trfase_C_sf"/>
</dbReference>
<dbReference type="InterPro" id="IPR004045">
    <property type="entry name" value="Glutathione_S-Trfase_N"/>
</dbReference>
<dbReference type="InterPro" id="IPR004046">
    <property type="entry name" value="GST_C"/>
</dbReference>
<dbReference type="InterPro" id="IPR045074">
    <property type="entry name" value="GST_C_Tau"/>
</dbReference>
<dbReference type="InterPro" id="IPR045073">
    <property type="entry name" value="Omega/Tau-like"/>
</dbReference>
<dbReference type="InterPro" id="IPR036249">
    <property type="entry name" value="Thioredoxin-like_sf"/>
</dbReference>
<dbReference type="PANTHER" id="PTHR11260:SF597">
    <property type="entry name" value="GLUTATHIONE S-TRANSFERASE U18"/>
    <property type="match status" value="1"/>
</dbReference>
<dbReference type="PANTHER" id="PTHR11260">
    <property type="entry name" value="GLUTATHIONE S-TRANSFERASE, GST, SUPERFAMILY, GST DOMAIN CONTAINING"/>
    <property type="match status" value="1"/>
</dbReference>
<dbReference type="Pfam" id="PF00043">
    <property type="entry name" value="GST_C"/>
    <property type="match status" value="1"/>
</dbReference>
<dbReference type="Pfam" id="PF02798">
    <property type="entry name" value="GST_N"/>
    <property type="match status" value="1"/>
</dbReference>
<dbReference type="SFLD" id="SFLDG01152">
    <property type="entry name" value="Main.3:_Omega-_and_Tau-like"/>
    <property type="match status" value="1"/>
</dbReference>
<dbReference type="SFLD" id="SFLDG00358">
    <property type="entry name" value="Main_(cytGST)"/>
    <property type="match status" value="1"/>
</dbReference>
<dbReference type="SUPFAM" id="SSF47616">
    <property type="entry name" value="GST C-terminal domain-like"/>
    <property type="match status" value="1"/>
</dbReference>
<dbReference type="SUPFAM" id="SSF52833">
    <property type="entry name" value="Thioredoxin-like"/>
    <property type="match status" value="1"/>
</dbReference>
<dbReference type="PROSITE" id="PS50405">
    <property type="entry name" value="GST_CTER"/>
    <property type="match status" value="1"/>
</dbReference>
<dbReference type="PROSITE" id="PS50404">
    <property type="entry name" value="GST_NTER"/>
    <property type="match status" value="1"/>
</dbReference>
<organism>
    <name type="scientific">Arabidopsis thaliana</name>
    <name type="common">Mouse-ear cress</name>
    <dbReference type="NCBI Taxonomy" id="3702"/>
    <lineage>
        <taxon>Eukaryota</taxon>
        <taxon>Viridiplantae</taxon>
        <taxon>Streptophyta</taxon>
        <taxon>Embryophyta</taxon>
        <taxon>Tracheophyta</taxon>
        <taxon>Spermatophyta</taxon>
        <taxon>Magnoliopsida</taxon>
        <taxon>eudicotyledons</taxon>
        <taxon>Gunneridae</taxon>
        <taxon>Pentapetalae</taxon>
        <taxon>rosids</taxon>
        <taxon>malvids</taxon>
        <taxon>Brassicales</taxon>
        <taxon>Brassicaceae</taxon>
        <taxon>Camelineae</taxon>
        <taxon>Arabidopsis</taxon>
    </lineage>
</organism>
<accession>Q9FUS9</accession>
<accession>Q9SY78</accession>
<proteinExistence type="evidence at transcript level"/>
<reference key="1">
    <citation type="journal article" date="2002" name="Plant Mol. Biol.">
        <title>Probing the diversity of the Arabidopsis glutathione S-transferase gene family.</title>
        <authorList>
            <person name="Wagner U."/>
            <person name="Edwards R."/>
            <person name="Dixon D.P."/>
            <person name="Mauch F."/>
        </authorList>
    </citation>
    <scope>NUCLEOTIDE SEQUENCE [MRNA]</scope>
    <scope>GENE FAMILY</scope>
    <scope>NOMENCLATURE</scope>
    <source>
        <strain>cv. Columbia</strain>
    </source>
</reference>
<reference key="2">
    <citation type="journal article" date="2000" name="Nature">
        <title>Sequence and analysis of chromosome 1 of the plant Arabidopsis thaliana.</title>
        <authorList>
            <person name="Theologis A."/>
            <person name="Ecker J.R."/>
            <person name="Palm C.J."/>
            <person name="Federspiel N.A."/>
            <person name="Kaul S."/>
            <person name="White O."/>
            <person name="Alonso J."/>
            <person name="Altafi H."/>
            <person name="Araujo R."/>
            <person name="Bowman C.L."/>
            <person name="Brooks S.Y."/>
            <person name="Buehler E."/>
            <person name="Chan A."/>
            <person name="Chao Q."/>
            <person name="Chen H."/>
            <person name="Cheuk R.F."/>
            <person name="Chin C.W."/>
            <person name="Chung M.K."/>
            <person name="Conn L."/>
            <person name="Conway A.B."/>
            <person name="Conway A.R."/>
            <person name="Creasy T.H."/>
            <person name="Dewar K."/>
            <person name="Dunn P."/>
            <person name="Etgu P."/>
            <person name="Feldblyum T.V."/>
            <person name="Feng J.-D."/>
            <person name="Fong B."/>
            <person name="Fujii C.Y."/>
            <person name="Gill J.E."/>
            <person name="Goldsmith A.D."/>
            <person name="Haas B."/>
            <person name="Hansen N.F."/>
            <person name="Hughes B."/>
            <person name="Huizar L."/>
            <person name="Hunter J.L."/>
            <person name="Jenkins J."/>
            <person name="Johnson-Hopson C."/>
            <person name="Khan S."/>
            <person name="Khaykin E."/>
            <person name="Kim C.J."/>
            <person name="Koo H.L."/>
            <person name="Kremenetskaia I."/>
            <person name="Kurtz D.B."/>
            <person name="Kwan A."/>
            <person name="Lam B."/>
            <person name="Langin-Hooper S."/>
            <person name="Lee A."/>
            <person name="Lee J.M."/>
            <person name="Lenz C.A."/>
            <person name="Li J.H."/>
            <person name="Li Y.-P."/>
            <person name="Lin X."/>
            <person name="Liu S.X."/>
            <person name="Liu Z.A."/>
            <person name="Luros J.S."/>
            <person name="Maiti R."/>
            <person name="Marziali A."/>
            <person name="Militscher J."/>
            <person name="Miranda M."/>
            <person name="Nguyen M."/>
            <person name="Nierman W.C."/>
            <person name="Osborne B.I."/>
            <person name="Pai G."/>
            <person name="Peterson J."/>
            <person name="Pham P.K."/>
            <person name="Rizzo M."/>
            <person name="Rooney T."/>
            <person name="Rowley D."/>
            <person name="Sakano H."/>
            <person name="Salzberg S.L."/>
            <person name="Schwartz J.R."/>
            <person name="Shinn P."/>
            <person name="Southwick A.M."/>
            <person name="Sun H."/>
            <person name="Tallon L.J."/>
            <person name="Tambunga G."/>
            <person name="Toriumi M.J."/>
            <person name="Town C.D."/>
            <person name="Utterback T."/>
            <person name="Van Aken S."/>
            <person name="Vaysberg M."/>
            <person name="Vysotskaia V.S."/>
            <person name="Walker M."/>
            <person name="Wu D."/>
            <person name="Yu G."/>
            <person name="Fraser C.M."/>
            <person name="Venter J.C."/>
            <person name="Davis R.W."/>
        </authorList>
    </citation>
    <scope>NUCLEOTIDE SEQUENCE [LARGE SCALE GENOMIC DNA]</scope>
    <source>
        <strain>cv. Columbia</strain>
        <tissue>Rosette leaf</tissue>
    </source>
</reference>
<reference key="3">
    <citation type="journal article" date="2017" name="Plant J.">
        <title>Araport11: a complete reannotation of the Arabidopsis thaliana reference genome.</title>
        <authorList>
            <person name="Cheng C.Y."/>
            <person name="Krishnakumar V."/>
            <person name="Chan A.P."/>
            <person name="Thibaud-Nissen F."/>
            <person name="Schobel S."/>
            <person name="Town C.D."/>
        </authorList>
    </citation>
    <scope>GENOME REANNOTATION</scope>
    <source>
        <strain>cv. Columbia</strain>
    </source>
</reference>
<reference key="4">
    <citation type="journal article" date="2003" name="Science">
        <title>Empirical analysis of transcriptional activity in the Arabidopsis genome.</title>
        <authorList>
            <person name="Yamada K."/>
            <person name="Lim J."/>
            <person name="Dale J.M."/>
            <person name="Chen H."/>
            <person name="Shinn P."/>
            <person name="Palm C.J."/>
            <person name="Southwick A.M."/>
            <person name="Wu H.C."/>
            <person name="Kim C.J."/>
            <person name="Nguyen M."/>
            <person name="Pham P.K."/>
            <person name="Cheuk R.F."/>
            <person name="Karlin-Newmann G."/>
            <person name="Liu S.X."/>
            <person name="Lam B."/>
            <person name="Sakano H."/>
            <person name="Wu T."/>
            <person name="Yu G."/>
            <person name="Miranda M."/>
            <person name="Quach H.L."/>
            <person name="Tripp M."/>
            <person name="Chang C.H."/>
            <person name="Lee J.M."/>
            <person name="Toriumi M.J."/>
            <person name="Chan M.M."/>
            <person name="Tang C.C."/>
            <person name="Onodera C.S."/>
            <person name="Deng J.M."/>
            <person name="Akiyama K."/>
            <person name="Ansari Y."/>
            <person name="Arakawa T."/>
            <person name="Banh J."/>
            <person name="Banno F."/>
            <person name="Bowser L."/>
            <person name="Brooks S.Y."/>
            <person name="Carninci P."/>
            <person name="Chao Q."/>
            <person name="Choy N."/>
            <person name="Enju A."/>
            <person name="Goldsmith A.D."/>
            <person name="Gurjal M."/>
            <person name="Hansen N.F."/>
            <person name="Hayashizaki Y."/>
            <person name="Johnson-Hopson C."/>
            <person name="Hsuan V.W."/>
            <person name="Iida K."/>
            <person name="Karnes M."/>
            <person name="Khan S."/>
            <person name="Koesema E."/>
            <person name="Ishida J."/>
            <person name="Jiang P.X."/>
            <person name="Jones T."/>
            <person name="Kawai J."/>
            <person name="Kamiya A."/>
            <person name="Meyers C."/>
            <person name="Nakajima M."/>
            <person name="Narusaka M."/>
            <person name="Seki M."/>
            <person name="Sakurai T."/>
            <person name="Satou M."/>
            <person name="Tamse R."/>
            <person name="Vaysberg M."/>
            <person name="Wallender E.K."/>
            <person name="Wong C."/>
            <person name="Yamamura Y."/>
            <person name="Yuan S."/>
            <person name="Shinozaki K."/>
            <person name="Davis R.W."/>
            <person name="Theologis A."/>
            <person name="Ecker J.R."/>
        </authorList>
    </citation>
    <scope>NUCLEOTIDE SEQUENCE [LARGE SCALE MRNA]</scope>
    <source>
        <strain>cv. Columbia</strain>
    </source>
</reference>
<reference key="5">
    <citation type="journal article" date="2009" name="DNA Res.">
        <title>Analysis of multiple occurrences of alternative splicing events in Arabidopsis thaliana using novel sequenced full-length cDNAs.</title>
        <authorList>
            <person name="Iida K."/>
            <person name="Fukami-Kobayashi K."/>
            <person name="Toyoda A."/>
            <person name="Sakaki Y."/>
            <person name="Kobayashi M."/>
            <person name="Seki M."/>
            <person name="Shinozaki K."/>
        </authorList>
    </citation>
    <scope>NUCLEOTIDE SEQUENCE [LARGE SCALE MRNA]</scope>
    <source>
        <strain>cv. Columbia</strain>
    </source>
</reference>
<comment type="function">
    <text evidence="1">May be involved in the conjugation of reduced glutathione to a wide number of exogenous and endogenous hydrophobic electrophiles and have a detoxification role against certain herbicides.</text>
</comment>
<comment type="catalytic activity">
    <reaction>
        <text>RX + glutathione = an S-substituted glutathione + a halide anion + H(+)</text>
        <dbReference type="Rhea" id="RHEA:16437"/>
        <dbReference type="ChEBI" id="CHEBI:15378"/>
        <dbReference type="ChEBI" id="CHEBI:16042"/>
        <dbReference type="ChEBI" id="CHEBI:17792"/>
        <dbReference type="ChEBI" id="CHEBI:57925"/>
        <dbReference type="ChEBI" id="CHEBI:90779"/>
        <dbReference type="EC" id="2.5.1.18"/>
    </reaction>
</comment>
<comment type="subcellular location">
    <subcellularLocation>
        <location evidence="2">Cytoplasm</location>
        <location evidence="2">Cytosol</location>
    </subcellularLocation>
</comment>
<comment type="similarity">
    <text evidence="2">Belongs to the GST superfamily. Tau family.</text>
</comment>
<comment type="sequence caution" evidence="2">
    <conflict type="erroneous gene model prediction">
        <sequence resource="EMBL-CDS" id="AAD32886"/>
    </conflict>
</comment>
<gene>
    <name type="primary">GSTU18</name>
    <name type="synonym">GST29</name>
    <name type="ordered locus">At1g10360</name>
    <name type="ORF">F14N23.24</name>
</gene>
<name>GSTUI_ARATH</name>
<sequence>MATEDVKLIGSWASVYVMRARIALHLKSISYEFLQETYGSKSELLLKSNPVHKKMPVLIHADKPVCESNIIVHYIDEAWNSSGPSILPSHPYDRAIARFWAAYIDDQWFISVRSILTAQGDEEKKAAIAQVEERTKLLEKAFNDCSQGKPFFNGDHIGYLDIALGSFLGWWRVVELDANHKFLDETKTPSLVKWAERFCDDPAVKPIMPEITKLAEFARKLFPKRQA</sequence>
<feature type="chain" id="PRO_0000413564" description="Glutathione S-transferase U18">
    <location>
        <begin position="1"/>
        <end position="227"/>
    </location>
</feature>
<feature type="domain" description="GST N-terminal">
    <location>
        <begin position="4"/>
        <end position="83"/>
    </location>
</feature>
<feature type="domain" description="GST C-terminal">
    <location>
        <begin position="90"/>
        <end position="221"/>
    </location>
</feature>
<feature type="binding site" evidence="1">
    <location>
        <begin position="14"/>
        <end position="15"/>
    </location>
    <ligand>
        <name>glutathione</name>
        <dbReference type="ChEBI" id="CHEBI:57925"/>
    </ligand>
</feature>
<feature type="binding site" evidence="1">
    <location>
        <begin position="40"/>
        <end position="41"/>
    </location>
    <ligand>
        <name>glutathione</name>
        <dbReference type="ChEBI" id="CHEBI:57925"/>
    </ligand>
</feature>
<feature type="binding site" evidence="1">
    <location>
        <begin position="54"/>
        <end position="55"/>
    </location>
    <ligand>
        <name>glutathione</name>
        <dbReference type="ChEBI" id="CHEBI:57925"/>
    </ligand>
</feature>
<feature type="binding site" evidence="1">
    <location>
        <begin position="67"/>
        <end position="68"/>
    </location>
    <ligand>
        <name>glutathione</name>
        <dbReference type="ChEBI" id="CHEBI:57925"/>
    </ligand>
</feature>
<protein>
    <recommendedName>
        <fullName>Glutathione S-transferase U18</fullName>
        <shortName>AtGSTU18</shortName>
        <ecNumber>2.5.1.18</ecNumber>
    </recommendedName>
    <alternativeName>
        <fullName>GST class-tau member 18</fullName>
    </alternativeName>
    <alternativeName>
        <fullName>Glutathione S-transferase 29</fullName>
    </alternativeName>
</protein>
<keyword id="KW-0963">Cytoplasm</keyword>
<keyword id="KW-0216">Detoxification</keyword>
<keyword id="KW-1185">Reference proteome</keyword>
<keyword id="KW-0808">Transferase</keyword>
<evidence type="ECO:0000250" key="1"/>
<evidence type="ECO:0000305" key="2"/>